<dbReference type="EMBL" id="BA000022">
    <property type="protein sequence ID" value="BAA10767.1"/>
    <property type="molecule type" value="Genomic_DNA"/>
</dbReference>
<dbReference type="PIR" id="S77075">
    <property type="entry name" value="S77075"/>
</dbReference>
<dbReference type="IntAct" id="P74811">
    <property type="interactions" value="6"/>
</dbReference>
<dbReference type="STRING" id="1148.gene:10500271"/>
<dbReference type="PaxDb" id="1148-1673361"/>
<dbReference type="EnsemblBacteria" id="BAA10767">
    <property type="protein sequence ID" value="BAA10767"/>
    <property type="gene ID" value="BAA10767"/>
</dbReference>
<dbReference type="KEGG" id="syn:ssl1255"/>
<dbReference type="eggNOG" id="COG2886">
    <property type="taxonomic scope" value="Bacteria"/>
</dbReference>
<dbReference type="InParanoid" id="P74811"/>
<dbReference type="Proteomes" id="UP000001425">
    <property type="component" value="Chromosome"/>
</dbReference>
<dbReference type="InterPro" id="IPR005368">
    <property type="entry name" value="UPF0175"/>
</dbReference>
<dbReference type="InterPro" id="IPR052264">
    <property type="entry name" value="UPF0175_domain"/>
</dbReference>
<dbReference type="PANTHER" id="PTHR37525">
    <property type="entry name" value="UPF0175 PROTEIN SSL1255"/>
    <property type="match status" value="1"/>
</dbReference>
<dbReference type="PANTHER" id="PTHR37525:SF1">
    <property type="entry name" value="UPF0175 PROTEIN SSL1255"/>
    <property type="match status" value="1"/>
</dbReference>
<dbReference type="Pfam" id="PF03683">
    <property type="entry name" value="UPF0175"/>
    <property type="match status" value="1"/>
</dbReference>
<comment type="similarity">
    <text evidence="1">Belongs to the UPF0175 family.</text>
</comment>
<proteinExistence type="inferred from homology"/>
<accession>P74811</accession>
<gene>
    <name type="ordered locus">ssl1255</name>
</gene>
<sequence>MVDGRPMQITLNLPDRLNQIGEFDQNDWLREIAIALFEQEHISLARASKISSMEIMEFQKLLSDRGICIHYDVEELAQDIQHLQNRSWL</sequence>
<name>Y1255_SYNY3</name>
<protein>
    <recommendedName>
        <fullName>UPF0175 protein ssl1255</fullName>
    </recommendedName>
</protein>
<feature type="chain" id="PRO_0000159029" description="UPF0175 protein ssl1255">
    <location>
        <begin position="1"/>
        <end position="89"/>
    </location>
</feature>
<reference key="1">
    <citation type="journal article" date="1995" name="DNA Res.">
        <title>Sequence analysis of the genome of the unicellular cyanobacterium Synechocystis sp. strain PCC6803. I. Sequence features in the 1 Mb region from map positions 64% to 92% of the genome.</title>
        <authorList>
            <person name="Kaneko T."/>
            <person name="Tanaka A."/>
            <person name="Sato S."/>
            <person name="Kotani H."/>
            <person name="Sazuka T."/>
            <person name="Miyajima N."/>
            <person name="Sugiura M."/>
            <person name="Tabata S."/>
        </authorList>
    </citation>
    <scope>NUCLEOTIDE SEQUENCE [LARGE SCALE GENOMIC DNA]</scope>
    <source>
        <strain>ATCC 27184 / PCC 6803 / N-1</strain>
    </source>
</reference>
<reference key="2">
    <citation type="journal article" date="1996" name="DNA Res.">
        <title>Sequence analysis of the genome of the unicellular cyanobacterium Synechocystis sp. strain PCC6803. II. Sequence determination of the entire genome and assignment of potential protein-coding regions.</title>
        <authorList>
            <person name="Kaneko T."/>
            <person name="Sato S."/>
            <person name="Kotani H."/>
            <person name="Tanaka A."/>
            <person name="Asamizu E."/>
            <person name="Nakamura Y."/>
            <person name="Miyajima N."/>
            <person name="Hirosawa M."/>
            <person name="Sugiura M."/>
            <person name="Sasamoto S."/>
            <person name="Kimura T."/>
            <person name="Hosouchi T."/>
            <person name="Matsuno A."/>
            <person name="Muraki A."/>
            <person name="Nakazaki N."/>
            <person name="Naruo K."/>
            <person name="Okumura S."/>
            <person name="Shimpo S."/>
            <person name="Takeuchi C."/>
            <person name="Wada T."/>
            <person name="Watanabe A."/>
            <person name="Yamada M."/>
            <person name="Yasuda M."/>
            <person name="Tabata S."/>
        </authorList>
    </citation>
    <scope>NUCLEOTIDE SEQUENCE [LARGE SCALE GENOMIC DNA]</scope>
    <source>
        <strain>ATCC 27184 / PCC 6803 / Kazusa</strain>
    </source>
</reference>
<organism>
    <name type="scientific">Synechocystis sp. (strain ATCC 27184 / PCC 6803 / Kazusa)</name>
    <dbReference type="NCBI Taxonomy" id="1111708"/>
    <lineage>
        <taxon>Bacteria</taxon>
        <taxon>Bacillati</taxon>
        <taxon>Cyanobacteriota</taxon>
        <taxon>Cyanophyceae</taxon>
        <taxon>Synechococcales</taxon>
        <taxon>Merismopediaceae</taxon>
        <taxon>Synechocystis</taxon>
    </lineage>
</organism>
<evidence type="ECO:0000305" key="1"/>
<keyword id="KW-1185">Reference proteome</keyword>